<feature type="chain" id="PRO_1000061373" description="Mannosyl-3-phosphoglycerate phosphatase">
    <location>
        <begin position="1"/>
        <end position="271"/>
    </location>
</feature>
<feature type="active site" description="Nucleophile" evidence="1">
    <location>
        <position position="13"/>
    </location>
</feature>
<feature type="binding site" evidence="1">
    <location>
        <position position="13"/>
    </location>
    <ligand>
        <name>Mg(2+)</name>
        <dbReference type="ChEBI" id="CHEBI:18420"/>
    </ligand>
</feature>
<feature type="binding site" evidence="1">
    <location>
        <position position="15"/>
    </location>
    <ligand>
        <name>Mg(2+)</name>
        <dbReference type="ChEBI" id="CHEBI:18420"/>
    </ligand>
</feature>
<feature type="binding site" evidence="1">
    <location>
        <position position="214"/>
    </location>
    <ligand>
        <name>Mg(2+)</name>
        <dbReference type="ChEBI" id="CHEBI:18420"/>
    </ligand>
</feature>
<organism>
    <name type="scientific">Escherichia coli O1:K1 / APEC</name>
    <dbReference type="NCBI Taxonomy" id="405955"/>
    <lineage>
        <taxon>Bacteria</taxon>
        <taxon>Pseudomonadati</taxon>
        <taxon>Pseudomonadota</taxon>
        <taxon>Gammaproteobacteria</taxon>
        <taxon>Enterobacterales</taxon>
        <taxon>Enterobacteriaceae</taxon>
        <taxon>Escherichia</taxon>
    </lineage>
</organism>
<proteinExistence type="inferred from homology"/>
<comment type="catalytic activity">
    <reaction evidence="1">
        <text>2-O-(alpha-D-mannosyl)-3-phosphoglycerate + H2O = (2R)-2-O-(alpha-D-mannosyl)-glycerate + phosphate</text>
        <dbReference type="Rhea" id="RHEA:19309"/>
        <dbReference type="ChEBI" id="CHEBI:15377"/>
        <dbReference type="ChEBI" id="CHEBI:43474"/>
        <dbReference type="ChEBI" id="CHEBI:57541"/>
        <dbReference type="ChEBI" id="CHEBI:57744"/>
        <dbReference type="EC" id="3.1.3.70"/>
    </reaction>
</comment>
<comment type="cofactor">
    <cofactor evidence="1">
        <name>Mg(2+)</name>
        <dbReference type="ChEBI" id="CHEBI:18420"/>
    </cofactor>
</comment>
<comment type="subcellular location">
    <subcellularLocation>
        <location evidence="1">Cytoplasm</location>
    </subcellularLocation>
</comment>
<comment type="similarity">
    <text evidence="1">Belongs to the HAD-like hydrolase superfamily. MPGP family.</text>
</comment>
<dbReference type="EC" id="3.1.3.70" evidence="1"/>
<dbReference type="EMBL" id="CP000468">
    <property type="protein sequence ID" value="ABJ01293.1"/>
    <property type="molecule type" value="Genomic_DNA"/>
</dbReference>
<dbReference type="RefSeq" id="WP_000949113.1">
    <property type="nucleotide sequence ID" value="NZ_CADILS010000066.1"/>
</dbReference>
<dbReference type="SMR" id="A1ACA3"/>
<dbReference type="KEGG" id="ecv:APECO1_993"/>
<dbReference type="HOGENOM" id="CLU_063016_1_0_6"/>
<dbReference type="Proteomes" id="UP000008216">
    <property type="component" value="Chromosome"/>
</dbReference>
<dbReference type="GO" id="GO:0005829">
    <property type="term" value="C:cytosol"/>
    <property type="evidence" value="ECO:0007669"/>
    <property type="project" value="TreeGrafter"/>
</dbReference>
<dbReference type="GO" id="GO:0000287">
    <property type="term" value="F:magnesium ion binding"/>
    <property type="evidence" value="ECO:0007669"/>
    <property type="project" value="UniProtKB-ARBA"/>
</dbReference>
<dbReference type="GO" id="GO:0050531">
    <property type="term" value="F:mannosyl-3-phosphoglycerate phosphatase activity"/>
    <property type="evidence" value="ECO:0007669"/>
    <property type="project" value="UniProtKB-UniRule"/>
</dbReference>
<dbReference type="GO" id="GO:0051479">
    <property type="term" value="P:mannosylglycerate biosynthetic process"/>
    <property type="evidence" value="ECO:0007669"/>
    <property type="project" value="InterPro"/>
</dbReference>
<dbReference type="CDD" id="cd07507">
    <property type="entry name" value="HAD_Pase"/>
    <property type="match status" value="1"/>
</dbReference>
<dbReference type="Gene3D" id="3.40.50.1000">
    <property type="entry name" value="HAD superfamily/HAD-like"/>
    <property type="match status" value="1"/>
</dbReference>
<dbReference type="Gene3D" id="3.30.980.20">
    <property type="entry name" value="Putative mannosyl-3-phosphoglycerate phosphatase, domain 2"/>
    <property type="match status" value="1"/>
</dbReference>
<dbReference type="HAMAP" id="MF_00617">
    <property type="entry name" value="MPGP_rel"/>
    <property type="match status" value="1"/>
</dbReference>
<dbReference type="InterPro" id="IPR036412">
    <property type="entry name" value="HAD-like_sf"/>
</dbReference>
<dbReference type="InterPro" id="IPR006381">
    <property type="entry name" value="HAD-SF-IIB-MPGP"/>
</dbReference>
<dbReference type="InterPro" id="IPR006379">
    <property type="entry name" value="HAD-SF_hydro_IIB"/>
</dbReference>
<dbReference type="InterPro" id="IPR023214">
    <property type="entry name" value="HAD_sf"/>
</dbReference>
<dbReference type="InterPro" id="IPR012815">
    <property type="entry name" value="MPG_Pase"/>
</dbReference>
<dbReference type="NCBIfam" id="TIGR01484">
    <property type="entry name" value="HAD-SF-IIB"/>
    <property type="match status" value="1"/>
</dbReference>
<dbReference type="NCBIfam" id="TIGR01486">
    <property type="entry name" value="HAD-SF-IIB-MPGP"/>
    <property type="match status" value="1"/>
</dbReference>
<dbReference type="NCBIfam" id="TIGR02463">
    <property type="entry name" value="MPGP_rel"/>
    <property type="match status" value="1"/>
</dbReference>
<dbReference type="NCBIfam" id="NF002976">
    <property type="entry name" value="PRK03669.1"/>
    <property type="match status" value="1"/>
</dbReference>
<dbReference type="PANTHER" id="PTHR10000:SF8">
    <property type="entry name" value="HAD SUPERFAMILY HYDROLASE-LIKE, TYPE 3"/>
    <property type="match status" value="1"/>
</dbReference>
<dbReference type="PANTHER" id="PTHR10000">
    <property type="entry name" value="PHOSPHOSERINE PHOSPHATASE"/>
    <property type="match status" value="1"/>
</dbReference>
<dbReference type="Pfam" id="PF08282">
    <property type="entry name" value="Hydrolase_3"/>
    <property type="match status" value="1"/>
</dbReference>
<dbReference type="SFLD" id="SFLDG01142">
    <property type="entry name" value="C2.B.2:_Mannosyl-3-phosphoglyc"/>
    <property type="match status" value="1"/>
</dbReference>
<dbReference type="SFLD" id="SFLDG01140">
    <property type="entry name" value="C2.B:_Phosphomannomutase_and_P"/>
    <property type="match status" value="1"/>
</dbReference>
<dbReference type="SUPFAM" id="SSF56784">
    <property type="entry name" value="HAD-like"/>
    <property type="match status" value="1"/>
</dbReference>
<keyword id="KW-0963">Cytoplasm</keyword>
<keyword id="KW-0378">Hydrolase</keyword>
<keyword id="KW-0460">Magnesium</keyword>
<keyword id="KW-0479">Metal-binding</keyword>
<keyword id="KW-1185">Reference proteome</keyword>
<gene>
    <name type="ordered locus">Ecok1_17990</name>
    <name type="ORF">APECO1_993</name>
</gene>
<accession>A1ACA3</accession>
<reference key="1">
    <citation type="journal article" date="2007" name="J. Bacteriol.">
        <title>The genome sequence of avian pathogenic Escherichia coli strain O1:K1:H7 shares strong similarities with human extraintestinal pathogenic E. coli genomes.</title>
        <authorList>
            <person name="Johnson T.J."/>
            <person name="Kariyawasam S."/>
            <person name="Wannemuehler Y."/>
            <person name="Mangiamele P."/>
            <person name="Johnson S.J."/>
            <person name="Doetkott C."/>
            <person name="Skyberg J.A."/>
            <person name="Lynne A.M."/>
            <person name="Johnson J.R."/>
            <person name="Nolan L.K."/>
        </authorList>
    </citation>
    <scope>NUCLEOTIDE SEQUENCE [LARGE SCALE GENOMIC DNA]</scope>
</reference>
<sequence>MLSIQQPLLVFSDLDGTLLDSHSYDWQPAAPWLSRLREANVPVILCSSKTSAEMLYLQKTLGLQGLPLIAENGAVIQLAEQWQDIDGFPRIISGISHGEISQVLNTLREKEHFKFTTFDDVDDATIAEWTGLSRSQAALTQLHEASVTLIWRDSDERMAQFTARLNELGLQFMQGARFWHVLDASAGKDQAANWIIATYQQSSGKRPTTLGLGDGPNDAPLLEVMDYAVIVKGLNREGVHLHDEDPTRVWRTQREGPEGWREGLDHFFSAR</sequence>
<protein>
    <recommendedName>
        <fullName evidence="1">Mannosyl-3-phosphoglycerate phosphatase</fullName>
        <shortName evidence="1">MPGP</shortName>
        <ecNumber evidence="1">3.1.3.70</ecNumber>
    </recommendedName>
</protein>
<name>MPGP_ECOK1</name>
<evidence type="ECO:0000255" key="1">
    <source>
        <dbReference type="HAMAP-Rule" id="MF_00617"/>
    </source>
</evidence>